<accession>P00966</accession>
<accession>Q6LDL2</accession>
<accession>Q86UZ0</accession>
<accession>Q96GT4</accession>
<evidence type="ECO:0000250" key="1"/>
<evidence type="ECO:0000250" key="2">
    <source>
        <dbReference type="UniProtKB" id="P09034"/>
    </source>
</evidence>
<evidence type="ECO:0000250" key="3">
    <source>
        <dbReference type="UniProtKB" id="P16460"/>
    </source>
</evidence>
<evidence type="ECO:0000269" key="4">
    <source>
    </source>
</evidence>
<evidence type="ECO:0000269" key="5">
    <source>
    </source>
</evidence>
<evidence type="ECO:0000269" key="6">
    <source>
    </source>
</evidence>
<evidence type="ECO:0000269" key="7">
    <source>
    </source>
</evidence>
<evidence type="ECO:0000269" key="8">
    <source>
    </source>
</evidence>
<evidence type="ECO:0000269" key="9">
    <source>
    </source>
</evidence>
<evidence type="ECO:0000269" key="10">
    <source>
    </source>
</evidence>
<evidence type="ECO:0000269" key="11">
    <source>
    </source>
</evidence>
<evidence type="ECO:0000269" key="12">
    <source>
    </source>
</evidence>
<evidence type="ECO:0000269" key="13">
    <source>
    </source>
</evidence>
<evidence type="ECO:0000269" key="14">
    <source>
    </source>
</evidence>
<evidence type="ECO:0000269" key="15">
    <source>
    </source>
</evidence>
<evidence type="ECO:0000269" key="16">
    <source>
    </source>
</evidence>
<evidence type="ECO:0000269" key="17">
    <source>
    </source>
</evidence>
<evidence type="ECO:0000269" key="18">
    <source>
    </source>
</evidence>
<evidence type="ECO:0000269" key="19">
    <source>
    </source>
</evidence>
<evidence type="ECO:0000269" key="20">
    <source>
    </source>
</evidence>
<evidence type="ECO:0000269" key="21">
    <source>
    </source>
</evidence>
<evidence type="ECO:0000269" key="22">
    <source>
    </source>
</evidence>
<evidence type="ECO:0000269" key="23">
    <source>
    </source>
</evidence>
<evidence type="ECO:0000269" key="24">
    <source>
    </source>
</evidence>
<evidence type="ECO:0000305" key="25"/>
<evidence type="ECO:0000305" key="26">
    <source>
    </source>
</evidence>
<evidence type="ECO:0000305" key="27">
    <source>
    </source>
</evidence>
<evidence type="ECO:0000305" key="28">
    <source>
    </source>
</evidence>
<evidence type="ECO:0000312" key="29">
    <source>
        <dbReference type="HGNC" id="HGNC:758"/>
    </source>
</evidence>
<evidence type="ECO:0007744" key="30">
    <source>
    </source>
</evidence>
<evidence type="ECO:0007744" key="31">
    <source>
    </source>
</evidence>
<evidence type="ECO:0007744" key="32">
    <source>
    </source>
</evidence>
<evidence type="ECO:0007829" key="33">
    <source>
        <dbReference type="PDB" id="2NZ2"/>
    </source>
</evidence>
<dbReference type="EC" id="6.3.4.5" evidence="13 20 24"/>
<dbReference type="EMBL" id="X01630">
    <property type="protein sequence ID" value="CAA25771.1"/>
    <property type="molecule type" value="mRNA"/>
</dbReference>
<dbReference type="EMBL" id="L00084">
    <property type="protein sequence ID" value="AAA51783.1"/>
    <property type="molecule type" value="Genomic_DNA"/>
</dbReference>
<dbReference type="EMBL" id="L00079">
    <property type="protein sequence ID" value="AAA51783.1"/>
    <property type="status" value="JOINED"/>
    <property type="molecule type" value="Genomic_DNA"/>
</dbReference>
<dbReference type="EMBL" id="L00080">
    <property type="protein sequence ID" value="AAA51783.1"/>
    <property type="status" value="JOINED"/>
    <property type="molecule type" value="Genomic_DNA"/>
</dbReference>
<dbReference type="EMBL" id="L00081">
    <property type="protein sequence ID" value="AAA51783.1"/>
    <property type="status" value="JOINED"/>
    <property type="molecule type" value="Genomic_DNA"/>
</dbReference>
<dbReference type="EMBL" id="L00082">
    <property type="protein sequence ID" value="AAA51783.1"/>
    <property type="status" value="JOINED"/>
    <property type="molecule type" value="Genomic_DNA"/>
</dbReference>
<dbReference type="EMBL" id="L00083">
    <property type="protein sequence ID" value="AAA51783.1"/>
    <property type="status" value="JOINED"/>
    <property type="molecule type" value="Genomic_DNA"/>
</dbReference>
<dbReference type="EMBL" id="AY034076">
    <property type="protein sequence ID" value="AAK67487.1"/>
    <property type="molecule type" value="Genomic_DNA"/>
</dbReference>
<dbReference type="EMBL" id="AK027126">
    <property type="status" value="NOT_ANNOTATED_CDS"/>
    <property type="molecule type" value="mRNA"/>
</dbReference>
<dbReference type="EMBL" id="BC009243">
    <property type="protein sequence ID" value="AAH09243.1"/>
    <property type="molecule type" value="mRNA"/>
</dbReference>
<dbReference type="EMBL" id="BC021676">
    <property type="protein sequence ID" value="AAH21676.1"/>
    <property type="molecule type" value="mRNA"/>
</dbReference>
<dbReference type="EMBL" id="M34903">
    <property type="protein sequence ID" value="AAA51782.1"/>
    <property type="molecule type" value="Genomic_DNA"/>
</dbReference>
<dbReference type="CCDS" id="CCDS6933.1"/>
<dbReference type="PIR" id="A01195">
    <property type="entry name" value="AJHURS"/>
</dbReference>
<dbReference type="RefSeq" id="NP_000041.2">
    <property type="nucleotide sequence ID" value="NM_000050.4"/>
</dbReference>
<dbReference type="RefSeq" id="NP_446464.1">
    <property type="nucleotide sequence ID" value="NM_054012.4"/>
</dbReference>
<dbReference type="RefSeq" id="XP_005272257.1">
    <property type="nucleotide sequence ID" value="XM_005272200.3"/>
</dbReference>
<dbReference type="PDB" id="2NZ2">
    <property type="method" value="X-ray"/>
    <property type="resolution" value="2.40 A"/>
    <property type="chains" value="A=1-412"/>
</dbReference>
<dbReference type="PDBsum" id="2NZ2"/>
<dbReference type="SMR" id="P00966"/>
<dbReference type="BioGRID" id="106937">
    <property type="interactions" value="201"/>
</dbReference>
<dbReference type="DIP" id="DIP-34055N"/>
<dbReference type="FunCoup" id="P00966">
    <property type="interactions" value="1268"/>
</dbReference>
<dbReference type="IntAct" id="P00966">
    <property type="interactions" value="76"/>
</dbReference>
<dbReference type="MINT" id="P00966"/>
<dbReference type="STRING" id="9606.ENSP00000361471"/>
<dbReference type="DrugBank" id="DB00125">
    <property type="generic name" value="Arginine"/>
</dbReference>
<dbReference type="DrugBank" id="DB00128">
    <property type="generic name" value="Aspartic acid"/>
</dbReference>
<dbReference type="DrugBank" id="DB00171">
    <property type="generic name" value="ATP"/>
</dbReference>
<dbReference type="DrugBank" id="DB00155">
    <property type="generic name" value="Citrulline"/>
</dbReference>
<dbReference type="DrugCentral" id="P00966"/>
<dbReference type="GlyGen" id="P00966">
    <property type="glycosylation" value="4 sites, 1 O-linked glycan (4 sites)"/>
</dbReference>
<dbReference type="iPTMnet" id="P00966"/>
<dbReference type="MetOSite" id="P00966"/>
<dbReference type="PhosphoSitePlus" id="P00966"/>
<dbReference type="BioMuta" id="ASS1"/>
<dbReference type="DMDM" id="20141195"/>
<dbReference type="CPTAC" id="CPTAC-169"/>
<dbReference type="CPTAC" id="CPTAC-170"/>
<dbReference type="jPOST" id="P00966"/>
<dbReference type="MassIVE" id="P00966"/>
<dbReference type="PaxDb" id="9606-ENSP00000361471"/>
<dbReference type="PeptideAtlas" id="P00966"/>
<dbReference type="ProteomicsDB" id="51293"/>
<dbReference type="Pumba" id="P00966"/>
<dbReference type="Antibodypedia" id="4531">
    <property type="antibodies" value="537 antibodies from 37 providers"/>
</dbReference>
<dbReference type="DNASU" id="445"/>
<dbReference type="Ensembl" id="ENST00000352480.10">
    <property type="protein sequence ID" value="ENSP00000253004.6"/>
    <property type="gene ID" value="ENSG00000130707.18"/>
</dbReference>
<dbReference type="Ensembl" id="ENST00000372393.7">
    <property type="protein sequence ID" value="ENSP00000361469.2"/>
    <property type="gene ID" value="ENSG00000130707.18"/>
</dbReference>
<dbReference type="Ensembl" id="ENST00000372394.5">
    <property type="protein sequence ID" value="ENSP00000361471.1"/>
    <property type="gene ID" value="ENSG00000130707.18"/>
</dbReference>
<dbReference type="GeneID" id="445"/>
<dbReference type="KEGG" id="hsa:445"/>
<dbReference type="MANE-Select" id="ENST00000352480.10">
    <property type="protein sequence ID" value="ENSP00000253004.6"/>
    <property type="RefSeq nucleotide sequence ID" value="NM_054012.4"/>
    <property type="RefSeq protein sequence ID" value="NP_446464.1"/>
</dbReference>
<dbReference type="AGR" id="HGNC:758"/>
<dbReference type="CTD" id="445"/>
<dbReference type="DisGeNET" id="445"/>
<dbReference type="GeneCards" id="ASS1"/>
<dbReference type="GeneReviews" id="ASS1"/>
<dbReference type="HGNC" id="HGNC:758">
    <property type="gene designation" value="ASS1"/>
</dbReference>
<dbReference type="HPA" id="ENSG00000130707">
    <property type="expression patterns" value="Group enriched (kidney, liver)"/>
</dbReference>
<dbReference type="MalaCards" id="ASS1"/>
<dbReference type="MIM" id="215700">
    <property type="type" value="phenotype"/>
</dbReference>
<dbReference type="MIM" id="603470">
    <property type="type" value="gene"/>
</dbReference>
<dbReference type="neXtProt" id="NX_P00966"/>
<dbReference type="OpenTargets" id="ENSG00000130707"/>
<dbReference type="Orphanet" id="247546">
    <property type="disease" value="Acute neonatal citrullinemia type I"/>
</dbReference>
<dbReference type="Orphanet" id="247573">
    <property type="disease" value="Late-onset citrullinemia type I"/>
</dbReference>
<dbReference type="PharmGKB" id="PA162376926"/>
<dbReference type="VEuPathDB" id="HostDB:ENSG00000130707"/>
<dbReference type="eggNOG" id="KOG1706">
    <property type="taxonomic scope" value="Eukaryota"/>
</dbReference>
<dbReference type="GeneTree" id="ENSGT00390000004524"/>
<dbReference type="HOGENOM" id="CLU_032784_4_2_1"/>
<dbReference type="InParanoid" id="P00966"/>
<dbReference type="OMA" id="ACGAFHI"/>
<dbReference type="OrthoDB" id="9511472at2759"/>
<dbReference type="PAN-GO" id="P00966">
    <property type="GO annotations" value="5 GO annotations based on evolutionary models"/>
</dbReference>
<dbReference type="PhylomeDB" id="P00966"/>
<dbReference type="TreeFam" id="TF300736"/>
<dbReference type="BioCyc" id="MetaCyc:HS05425-MONOMER"/>
<dbReference type="BRENDA" id="6.3.4.5">
    <property type="organism ID" value="2681"/>
</dbReference>
<dbReference type="PathwayCommons" id="P00966"/>
<dbReference type="Reactome" id="R-HSA-70635">
    <property type="pathway name" value="Urea cycle"/>
</dbReference>
<dbReference type="SABIO-RK" id="P00966"/>
<dbReference type="SignaLink" id="P00966"/>
<dbReference type="UniPathway" id="UPA00068">
    <property type="reaction ID" value="UER00113"/>
</dbReference>
<dbReference type="UniPathway" id="UPA00158">
    <property type="reaction ID" value="UER00272"/>
</dbReference>
<dbReference type="BioGRID-ORCS" id="445">
    <property type="hits" value="27 hits in 1124 CRISPR screens"/>
</dbReference>
<dbReference type="ChiTaRS" id="ASS1">
    <property type="organism name" value="human"/>
</dbReference>
<dbReference type="EvolutionaryTrace" id="P00966"/>
<dbReference type="GeneWiki" id="Argininosuccinate_synthetase_1"/>
<dbReference type="GenomeRNAi" id="445"/>
<dbReference type="Pharos" id="P00966">
    <property type="development level" value="Tbio"/>
</dbReference>
<dbReference type="PRO" id="PR:P00966"/>
<dbReference type="Proteomes" id="UP000005640">
    <property type="component" value="Chromosome 9"/>
</dbReference>
<dbReference type="RNAct" id="P00966">
    <property type="molecule type" value="protein"/>
</dbReference>
<dbReference type="Bgee" id="ENSG00000130707">
    <property type="expression patterns" value="Expressed in right lobe of liver and 207 other cell types or tissues"/>
</dbReference>
<dbReference type="ExpressionAtlas" id="P00966">
    <property type="expression patterns" value="baseline and differential"/>
</dbReference>
<dbReference type="GO" id="GO:0070852">
    <property type="term" value="C:cell body fiber"/>
    <property type="evidence" value="ECO:0007669"/>
    <property type="project" value="Ensembl"/>
</dbReference>
<dbReference type="GO" id="GO:0005737">
    <property type="term" value="C:cytoplasm"/>
    <property type="evidence" value="ECO:0000318"/>
    <property type="project" value="GO_Central"/>
</dbReference>
<dbReference type="GO" id="GO:0005829">
    <property type="term" value="C:cytosol"/>
    <property type="evidence" value="ECO:0000314"/>
    <property type="project" value="UniProtKB"/>
</dbReference>
<dbReference type="GO" id="GO:0070062">
    <property type="term" value="C:extracellular exosome"/>
    <property type="evidence" value="ECO:0007005"/>
    <property type="project" value="UniProtKB"/>
</dbReference>
<dbReference type="GO" id="GO:0005741">
    <property type="term" value="C:mitochondrial outer membrane"/>
    <property type="evidence" value="ECO:0007669"/>
    <property type="project" value="Ensembl"/>
</dbReference>
<dbReference type="GO" id="GO:0005654">
    <property type="term" value="C:nucleoplasm"/>
    <property type="evidence" value="ECO:0000314"/>
    <property type="project" value="HPA"/>
</dbReference>
<dbReference type="GO" id="GO:0043204">
    <property type="term" value="C:perikaryon"/>
    <property type="evidence" value="ECO:0007669"/>
    <property type="project" value="Ensembl"/>
</dbReference>
<dbReference type="GO" id="GO:0016597">
    <property type="term" value="F:amino acid binding"/>
    <property type="evidence" value="ECO:0000315"/>
    <property type="project" value="BHF-UCL"/>
</dbReference>
<dbReference type="GO" id="GO:0004055">
    <property type="term" value="F:argininosuccinate synthase activity"/>
    <property type="evidence" value="ECO:0000315"/>
    <property type="project" value="UniProtKB"/>
</dbReference>
<dbReference type="GO" id="GO:0005524">
    <property type="term" value="F:ATP binding"/>
    <property type="evidence" value="ECO:0007669"/>
    <property type="project" value="UniProtKB-KW"/>
</dbReference>
<dbReference type="GO" id="GO:0042802">
    <property type="term" value="F:identical protein binding"/>
    <property type="evidence" value="ECO:0000353"/>
    <property type="project" value="IntAct"/>
</dbReference>
<dbReference type="GO" id="GO:0003723">
    <property type="term" value="F:RNA binding"/>
    <property type="evidence" value="ECO:0007005"/>
    <property type="project" value="UniProtKB"/>
</dbReference>
<dbReference type="GO" id="GO:0015643">
    <property type="term" value="F:toxic substance binding"/>
    <property type="evidence" value="ECO:0007669"/>
    <property type="project" value="Ensembl"/>
</dbReference>
<dbReference type="GO" id="GO:0006953">
    <property type="term" value="P:acute-phase response"/>
    <property type="evidence" value="ECO:0007669"/>
    <property type="project" value="Ensembl"/>
</dbReference>
<dbReference type="GO" id="GO:0000053">
    <property type="term" value="P:argininosuccinate metabolic process"/>
    <property type="evidence" value="ECO:0000315"/>
    <property type="project" value="BHF-UCL"/>
</dbReference>
<dbReference type="GO" id="GO:0006531">
    <property type="term" value="P:aspartate metabolic process"/>
    <property type="evidence" value="ECO:0000315"/>
    <property type="project" value="BHF-UCL"/>
</dbReference>
<dbReference type="GO" id="GO:0071418">
    <property type="term" value="P:cellular response to amine stimulus"/>
    <property type="evidence" value="ECO:0007669"/>
    <property type="project" value="Ensembl"/>
</dbReference>
<dbReference type="GO" id="GO:0071230">
    <property type="term" value="P:cellular response to amino acid stimulus"/>
    <property type="evidence" value="ECO:0007669"/>
    <property type="project" value="Ensembl"/>
</dbReference>
<dbReference type="GO" id="GO:0071242">
    <property type="term" value="P:cellular response to ammonium ion"/>
    <property type="evidence" value="ECO:0007669"/>
    <property type="project" value="Ensembl"/>
</dbReference>
<dbReference type="GO" id="GO:0071320">
    <property type="term" value="P:cellular response to cAMP"/>
    <property type="evidence" value="ECO:0007669"/>
    <property type="project" value="Ensembl"/>
</dbReference>
<dbReference type="GO" id="GO:0071549">
    <property type="term" value="P:cellular response to dexamethasone stimulus"/>
    <property type="evidence" value="ECO:0007669"/>
    <property type="project" value="Ensembl"/>
</dbReference>
<dbReference type="GO" id="GO:0071377">
    <property type="term" value="P:cellular response to glucagon stimulus"/>
    <property type="evidence" value="ECO:0007669"/>
    <property type="project" value="Ensembl"/>
</dbReference>
<dbReference type="GO" id="GO:0071499">
    <property type="term" value="P:cellular response to laminar fluid shear stress"/>
    <property type="evidence" value="ECO:0000315"/>
    <property type="project" value="BHF-UCL"/>
</dbReference>
<dbReference type="GO" id="GO:0071222">
    <property type="term" value="P:cellular response to lipopolysaccharide"/>
    <property type="evidence" value="ECO:0007669"/>
    <property type="project" value="Ensembl"/>
</dbReference>
<dbReference type="GO" id="GO:0071400">
    <property type="term" value="P:cellular response to oleic acid"/>
    <property type="evidence" value="ECO:0007669"/>
    <property type="project" value="Ensembl"/>
</dbReference>
<dbReference type="GO" id="GO:0071356">
    <property type="term" value="P:cellular response to tumor necrosis factor"/>
    <property type="evidence" value="ECO:0007669"/>
    <property type="project" value="Ensembl"/>
</dbReference>
<dbReference type="GO" id="GO:0071346">
    <property type="term" value="P:cellular response to type II interferon"/>
    <property type="evidence" value="ECO:0007669"/>
    <property type="project" value="Ensembl"/>
</dbReference>
<dbReference type="GO" id="GO:0007623">
    <property type="term" value="P:circadian rhythm"/>
    <property type="evidence" value="ECO:0000314"/>
    <property type="project" value="UniProtKB"/>
</dbReference>
<dbReference type="GO" id="GO:0000052">
    <property type="term" value="P:citrulline metabolic process"/>
    <property type="evidence" value="ECO:0000315"/>
    <property type="project" value="BHF-UCL"/>
</dbReference>
<dbReference type="GO" id="GO:0060539">
    <property type="term" value="P:diaphragm development"/>
    <property type="evidence" value="ECO:0007669"/>
    <property type="project" value="Ensembl"/>
</dbReference>
<dbReference type="GO" id="GO:0001822">
    <property type="term" value="P:kidney development"/>
    <property type="evidence" value="ECO:0007669"/>
    <property type="project" value="Ensembl"/>
</dbReference>
<dbReference type="GO" id="GO:0006526">
    <property type="term" value="P:L-arginine biosynthetic process"/>
    <property type="evidence" value="ECO:0000315"/>
    <property type="project" value="UniProtKB"/>
</dbReference>
<dbReference type="GO" id="GO:0001889">
    <property type="term" value="P:liver development"/>
    <property type="evidence" value="ECO:0007669"/>
    <property type="project" value="Ensembl"/>
</dbReference>
<dbReference type="GO" id="GO:0007494">
    <property type="term" value="P:midgut development"/>
    <property type="evidence" value="ECO:0007669"/>
    <property type="project" value="Ensembl"/>
</dbReference>
<dbReference type="GO" id="GO:1903038">
    <property type="term" value="P:negative regulation of leukocyte cell-cell adhesion"/>
    <property type="evidence" value="ECO:0000315"/>
    <property type="project" value="BHF-UCL"/>
</dbReference>
<dbReference type="GO" id="GO:0045429">
    <property type="term" value="P:positive regulation of nitric oxide biosynthetic process"/>
    <property type="evidence" value="ECO:0000315"/>
    <property type="project" value="BHF-UCL"/>
</dbReference>
<dbReference type="GO" id="GO:0032355">
    <property type="term" value="P:response to estradiol"/>
    <property type="evidence" value="ECO:0007669"/>
    <property type="project" value="Ensembl"/>
</dbReference>
<dbReference type="GO" id="GO:0060416">
    <property type="term" value="P:response to growth hormone"/>
    <property type="evidence" value="ECO:0007669"/>
    <property type="project" value="Ensembl"/>
</dbReference>
<dbReference type="GO" id="GO:0010046">
    <property type="term" value="P:response to mycotoxin"/>
    <property type="evidence" value="ECO:0007669"/>
    <property type="project" value="Ensembl"/>
</dbReference>
<dbReference type="GO" id="GO:0007584">
    <property type="term" value="P:response to nutrient"/>
    <property type="evidence" value="ECO:0007669"/>
    <property type="project" value="Ensembl"/>
</dbReference>
<dbReference type="GO" id="GO:0009410">
    <property type="term" value="P:response to xenobiotic stimulus"/>
    <property type="evidence" value="ECO:0007669"/>
    <property type="project" value="Ensembl"/>
</dbReference>
<dbReference type="GO" id="GO:0010043">
    <property type="term" value="P:response to zinc ion"/>
    <property type="evidence" value="ECO:0007669"/>
    <property type="project" value="Ensembl"/>
</dbReference>
<dbReference type="GO" id="GO:0000050">
    <property type="term" value="P:urea cycle"/>
    <property type="evidence" value="ECO:0000315"/>
    <property type="project" value="UniProtKB"/>
</dbReference>
<dbReference type="CDD" id="cd01999">
    <property type="entry name" value="ASS"/>
    <property type="match status" value="1"/>
</dbReference>
<dbReference type="FunFam" id="3.40.50.620:FF:000019">
    <property type="entry name" value="Argininosuccinate synthase"/>
    <property type="match status" value="1"/>
</dbReference>
<dbReference type="FunFam" id="1.20.5.470:FF:000003">
    <property type="entry name" value="Argininosuccinate synthase 1"/>
    <property type="match status" value="1"/>
</dbReference>
<dbReference type="FunFam" id="3.90.1260.10:FF:000005">
    <property type="entry name" value="Argininosuccinate synthase 1"/>
    <property type="match status" value="1"/>
</dbReference>
<dbReference type="Gene3D" id="3.90.1260.10">
    <property type="entry name" value="Argininosuccinate synthetase, chain A, domain 2"/>
    <property type="match status" value="1"/>
</dbReference>
<dbReference type="Gene3D" id="3.40.50.620">
    <property type="entry name" value="HUPs"/>
    <property type="match status" value="1"/>
</dbReference>
<dbReference type="Gene3D" id="1.20.5.470">
    <property type="entry name" value="Single helix bin"/>
    <property type="match status" value="1"/>
</dbReference>
<dbReference type="HAMAP" id="MF_00005">
    <property type="entry name" value="Arg_succ_synth_type1"/>
    <property type="match status" value="1"/>
</dbReference>
<dbReference type="InterPro" id="IPR048268">
    <property type="entry name" value="Arginosuc_syn_C"/>
</dbReference>
<dbReference type="InterPro" id="IPR048267">
    <property type="entry name" value="Arginosuc_syn_N"/>
</dbReference>
<dbReference type="InterPro" id="IPR001518">
    <property type="entry name" value="Arginosuc_synth"/>
</dbReference>
<dbReference type="InterPro" id="IPR018223">
    <property type="entry name" value="Arginosuc_synth_CS"/>
</dbReference>
<dbReference type="InterPro" id="IPR023434">
    <property type="entry name" value="Arginosuc_synth_type_1_subfam"/>
</dbReference>
<dbReference type="InterPro" id="IPR024074">
    <property type="entry name" value="AS_cat/multimer_dom_body"/>
</dbReference>
<dbReference type="InterPro" id="IPR014729">
    <property type="entry name" value="Rossmann-like_a/b/a_fold"/>
</dbReference>
<dbReference type="NCBIfam" id="TIGR00032">
    <property type="entry name" value="argG"/>
    <property type="match status" value="1"/>
</dbReference>
<dbReference type="NCBIfam" id="NF001770">
    <property type="entry name" value="PRK00509.1"/>
    <property type="match status" value="1"/>
</dbReference>
<dbReference type="PANTHER" id="PTHR11587">
    <property type="entry name" value="ARGININOSUCCINATE SYNTHASE"/>
    <property type="match status" value="1"/>
</dbReference>
<dbReference type="PANTHER" id="PTHR11587:SF5">
    <property type="entry name" value="ARGININOSUCCINATE SYNTHASE"/>
    <property type="match status" value="1"/>
</dbReference>
<dbReference type="Pfam" id="PF20979">
    <property type="entry name" value="Arginosuc_syn_C"/>
    <property type="match status" value="1"/>
</dbReference>
<dbReference type="Pfam" id="PF00764">
    <property type="entry name" value="Arginosuc_synth"/>
    <property type="match status" value="1"/>
</dbReference>
<dbReference type="SUPFAM" id="SSF52402">
    <property type="entry name" value="Adenine nucleotide alpha hydrolases-like"/>
    <property type="match status" value="1"/>
</dbReference>
<dbReference type="SUPFAM" id="SSF69864">
    <property type="entry name" value="Argininosuccinate synthetase, C-terminal domain"/>
    <property type="match status" value="1"/>
</dbReference>
<dbReference type="PROSITE" id="PS00564">
    <property type="entry name" value="ARGININOSUCCIN_SYN_1"/>
    <property type="match status" value="1"/>
</dbReference>
<dbReference type="PROSITE" id="PS00565">
    <property type="entry name" value="ARGININOSUCCIN_SYN_2"/>
    <property type="match status" value="1"/>
</dbReference>
<name>ASSY_HUMAN</name>
<proteinExistence type="evidence at protein level"/>
<protein>
    <recommendedName>
        <fullName evidence="25">Argininosuccinate synthase</fullName>
        <ecNumber evidence="13 20 24">6.3.4.5</ecNumber>
    </recommendedName>
    <alternativeName>
        <fullName>Citrulline--aspartate ligase</fullName>
    </alternativeName>
</protein>
<keyword id="KW-0002">3D-structure</keyword>
<keyword id="KW-0007">Acetylation</keyword>
<keyword id="KW-0028">Amino-acid biosynthesis</keyword>
<keyword id="KW-0055">Arginine biosynthesis</keyword>
<keyword id="KW-0067">ATP-binding</keyword>
<keyword id="KW-0963">Cytoplasm</keyword>
<keyword id="KW-0903">Direct protein sequencing</keyword>
<keyword id="KW-0225">Disease variant</keyword>
<keyword id="KW-0436">Ligase</keyword>
<keyword id="KW-0547">Nucleotide-binding</keyword>
<keyword id="KW-0597">Phosphoprotein</keyword>
<keyword id="KW-1267">Proteomics identification</keyword>
<keyword id="KW-1185">Reference proteome</keyword>
<keyword id="KW-0835">Urea cycle</keyword>
<comment type="function">
    <text evidence="26 27 28">One of the enzymes of the urea cycle, the metabolic pathway transforming neurotoxic amonia produced by protein catabolism into inocuous urea in the liver of ureotelic animals. Catalyzes the formation of arginosuccinate from aspartate, citrulline and ATP and together with ASL it is responsible for the biosynthesis of arginine in most body tissues.</text>
</comment>
<comment type="catalytic activity">
    <reaction evidence="13 20 24">
        <text>L-citrulline + L-aspartate + ATP = 2-(N(omega)-L-arginino)succinate + AMP + diphosphate + H(+)</text>
        <dbReference type="Rhea" id="RHEA:10932"/>
        <dbReference type="ChEBI" id="CHEBI:15378"/>
        <dbReference type="ChEBI" id="CHEBI:29991"/>
        <dbReference type="ChEBI" id="CHEBI:30616"/>
        <dbReference type="ChEBI" id="CHEBI:33019"/>
        <dbReference type="ChEBI" id="CHEBI:57472"/>
        <dbReference type="ChEBI" id="CHEBI:57743"/>
        <dbReference type="ChEBI" id="CHEBI:456215"/>
        <dbReference type="EC" id="6.3.4.5"/>
    </reaction>
</comment>
<comment type="biophysicochemical properties">
    <kinetics>
        <KM evidence="13">112 uM for citrulline (at pH 7.0 and 37 degrees Celsius)</KM>
        <KM evidence="13">68 uM for aspartate (at pH 7.0 and 37 degrees Celsius)</KM>
        <Vmax evidence="13">143.0 nmol/min/mg enzyme toward citrulline (at pH 7.0 and 37 degrees Celsius)</Vmax>
        <Vmax evidence="13">116.0 nmol/min/mg enzyme toward aspartate (at pH 7.0 and 37 degrees)</Vmax>
    </kinetics>
</comment>
<comment type="pathway">
    <text evidence="26 27 28">Amino-acid biosynthesis; L-arginine biosynthesis; L-arginine from L-ornithine and carbamoyl phosphate: step 2/3.</text>
</comment>
<comment type="pathway">
    <text evidence="26 27 28">Nitrogen metabolism; urea cycle; (N(omega)-L-arginino)succinate from L-aspartate and L-citrulline: step 1/1.</text>
</comment>
<comment type="subunit">
    <text evidence="3 11 12 22">Homotetramer (PubMed:18323623). Interacts with NMRAL1 (PubMed:17496144). Interacts with CLOCK; in a circadian manner (PubMed:28985504). Forms tissue-specific complexes with ASL, SLC7A1, HSP90AA1 and nitric oxide synthase NOS1, NOS2 or NOS3; the complex regulates cell-autonomous L-arginine synthesis and citrulline recycling while channeling extracellular L-arginine to nitric oxide synthesis pathway.</text>
</comment>
<comment type="interaction">
    <interactant intactId="EBI-536842">
        <id>P00966</id>
    </interactant>
    <interactant intactId="EBI-365961">
        <id>P10398</id>
        <label>ARAF</label>
    </interactant>
    <organismsDiffer>false</organismsDiffer>
    <experiments>4</experiments>
</comment>
<comment type="interaction">
    <interactant intactId="EBI-536842">
        <id>P00966</id>
    </interactant>
    <interactant intactId="EBI-536842">
        <id>P00966</id>
        <label>ASS1</label>
    </interactant>
    <organismsDiffer>false</organismsDiffer>
    <experiments>3</experiments>
</comment>
<comment type="interaction">
    <interactant intactId="EBI-536842">
        <id>P00966</id>
    </interactant>
    <interactant intactId="EBI-2862643">
        <id>Q9HBL8</id>
        <label>NMRAL1</label>
    </interactant>
    <organismsDiffer>false</organismsDiffer>
    <experiments>3</experiments>
</comment>
<comment type="interaction">
    <interactant intactId="EBI-536842">
        <id>P00966</id>
    </interactant>
    <interactant intactId="EBI-3215577">
        <id>Q9NVM4</id>
        <label>PRMT7</label>
    </interactant>
    <organismsDiffer>false</organismsDiffer>
    <experiments>9</experiments>
</comment>
<comment type="subcellular location">
    <subcellularLocation>
        <location evidence="22 27">Cytoplasm</location>
        <location evidence="22 27">Cytosol</location>
    </subcellularLocation>
</comment>
<comment type="tissue specificity">
    <text evidence="10">Expressed in adult liver.</text>
</comment>
<comment type="developmental stage">
    <text evidence="10">Expressed in fetal liver and kidney.</text>
</comment>
<comment type="PTM">
    <text evidence="22">Acetylated by CLOCK in a circadian manner which negatively regulates its enzyme activity. Deacetylated by histone deacetylases.</text>
</comment>
<comment type="disease" evidence="4 5 6 7 8 9 13 14 15 16 17 18 19 20 21 23">
    <disease id="DI-00309">
        <name>Citrullinemia 1</name>
        <acronym>CTLN1</acronym>
        <description>The classic form of citrullinemia, an autosomal recessive disease characterized primarily by elevated serum and urine citrulline levels. Ammonia intoxication is another manifestation. It is a disorder of the urea cycle, usually manifesting in the first few days of life. Affected infants appear normal at birth, but as ammonia builds up in the body they present symptoms such as lethargy, poor feeding, vomiting, seizures and loss of consciousness. Less commonly, a milder form can develop later in childhood or adulthood.</description>
        <dbReference type="MIM" id="215700"/>
    </disease>
    <text>The disease is caused by variants affecting the gene represented in this entry.</text>
</comment>
<comment type="similarity">
    <text evidence="25">Belongs to the argininosuccinate synthase family. Type 1 subfamily.</text>
</comment>
<comment type="online information" name="Argininosuccinate synthetase 1 (ASS1)">
    <link uri="https://databases.lovd.nl/shared/genes/ASS1"/>
    <text>Leiden Open Variation Database (LOVD)</text>
</comment>
<gene>
    <name evidence="29" type="primary">ASS1</name>
    <name evidence="29" type="synonym">ASS</name>
</gene>
<reference key="1">
    <citation type="journal article" date="1983" name="Nucleic Acids Res.">
        <title>Sequence for human argininosuccinate synthetase cDNA.</title>
        <authorList>
            <person name="Bock H.-G.O."/>
            <person name="Su T.-S."/>
            <person name="O'Brien W.E."/>
            <person name="Beaudet A.L."/>
        </authorList>
    </citation>
    <scope>NUCLEOTIDE SEQUENCE [MRNA]</scope>
</reference>
<reference key="2">
    <citation type="journal article" date="1984" name="J. Biol. Chem.">
        <title>Molecular structures of human argininosuccinate synthetase pseudogenes. Evolutionary and mechanistic implications.</title>
        <authorList>
            <person name="Freytag S.O."/>
            <person name="Bock H.-G.O."/>
            <person name="Beaudet A.L."/>
            <person name="O'Brien W.E."/>
        </authorList>
    </citation>
    <scope>NUCLEOTIDE SEQUENCE [GENOMIC DNA]</scope>
</reference>
<reference key="3">
    <citation type="journal article" date="2002" name="Hum. Genet.">
        <title>Structure of the human argininosuccinate synthetase gene and an improved system for molecular diagnostics in patients with classical and mild citrullinemia.</title>
        <authorList>
            <person name="Haeberle J."/>
            <person name="Pauli S."/>
            <person name="Linnebank M."/>
            <person name="Kleijer W.J."/>
            <person name="Bakker H.D."/>
            <person name="Wanders R.J.A."/>
            <person name="Harms E."/>
            <person name="Koch H.G."/>
        </authorList>
    </citation>
    <scope>NUCLEOTIDE SEQUENCE [GENOMIC DNA]</scope>
    <scope>VARIANTS CTLN1 LEU-108; ARG-179; VAL-362 AND ARG-390</scope>
</reference>
<reference key="4">
    <citation type="journal article" date="2004" name="Nat. Genet.">
        <title>Complete sequencing and characterization of 21,243 full-length human cDNAs.</title>
        <authorList>
            <person name="Ota T."/>
            <person name="Suzuki Y."/>
            <person name="Nishikawa T."/>
            <person name="Otsuki T."/>
            <person name="Sugiyama T."/>
            <person name="Irie R."/>
            <person name="Wakamatsu A."/>
            <person name="Hayashi K."/>
            <person name="Sato H."/>
            <person name="Nagai K."/>
            <person name="Kimura K."/>
            <person name="Makita H."/>
            <person name="Sekine M."/>
            <person name="Obayashi M."/>
            <person name="Nishi T."/>
            <person name="Shibahara T."/>
            <person name="Tanaka T."/>
            <person name="Ishii S."/>
            <person name="Yamamoto J."/>
            <person name="Saito K."/>
            <person name="Kawai Y."/>
            <person name="Isono Y."/>
            <person name="Nakamura Y."/>
            <person name="Nagahari K."/>
            <person name="Murakami K."/>
            <person name="Yasuda T."/>
            <person name="Iwayanagi T."/>
            <person name="Wagatsuma M."/>
            <person name="Shiratori A."/>
            <person name="Sudo H."/>
            <person name="Hosoiri T."/>
            <person name="Kaku Y."/>
            <person name="Kodaira H."/>
            <person name="Kondo H."/>
            <person name="Sugawara M."/>
            <person name="Takahashi M."/>
            <person name="Kanda K."/>
            <person name="Yokoi T."/>
            <person name="Furuya T."/>
            <person name="Kikkawa E."/>
            <person name="Omura Y."/>
            <person name="Abe K."/>
            <person name="Kamihara K."/>
            <person name="Katsuta N."/>
            <person name="Sato K."/>
            <person name="Tanikawa M."/>
            <person name="Yamazaki M."/>
            <person name="Ninomiya K."/>
            <person name="Ishibashi T."/>
            <person name="Yamashita H."/>
            <person name="Murakawa K."/>
            <person name="Fujimori K."/>
            <person name="Tanai H."/>
            <person name="Kimata M."/>
            <person name="Watanabe M."/>
            <person name="Hiraoka S."/>
            <person name="Chiba Y."/>
            <person name="Ishida S."/>
            <person name="Ono Y."/>
            <person name="Takiguchi S."/>
            <person name="Watanabe S."/>
            <person name="Yosida M."/>
            <person name="Hotuta T."/>
            <person name="Kusano J."/>
            <person name="Kanehori K."/>
            <person name="Takahashi-Fujii A."/>
            <person name="Hara H."/>
            <person name="Tanase T.-O."/>
            <person name="Nomura Y."/>
            <person name="Togiya S."/>
            <person name="Komai F."/>
            <person name="Hara R."/>
            <person name="Takeuchi K."/>
            <person name="Arita M."/>
            <person name="Imose N."/>
            <person name="Musashino K."/>
            <person name="Yuuki H."/>
            <person name="Oshima A."/>
            <person name="Sasaki N."/>
            <person name="Aotsuka S."/>
            <person name="Yoshikawa Y."/>
            <person name="Matsunawa H."/>
            <person name="Ichihara T."/>
            <person name="Shiohata N."/>
            <person name="Sano S."/>
            <person name="Moriya S."/>
            <person name="Momiyama H."/>
            <person name="Satoh N."/>
            <person name="Takami S."/>
            <person name="Terashima Y."/>
            <person name="Suzuki O."/>
            <person name="Nakagawa S."/>
            <person name="Senoh A."/>
            <person name="Mizoguchi H."/>
            <person name="Goto Y."/>
            <person name="Shimizu F."/>
            <person name="Wakebe H."/>
            <person name="Hishigaki H."/>
            <person name="Watanabe T."/>
            <person name="Sugiyama A."/>
            <person name="Takemoto M."/>
            <person name="Kawakami B."/>
            <person name="Yamazaki M."/>
            <person name="Watanabe K."/>
            <person name="Kumagai A."/>
            <person name="Itakura S."/>
            <person name="Fukuzumi Y."/>
            <person name="Fujimori Y."/>
            <person name="Komiyama M."/>
            <person name="Tashiro H."/>
            <person name="Tanigami A."/>
            <person name="Fujiwara T."/>
            <person name="Ono T."/>
            <person name="Yamada K."/>
            <person name="Fujii Y."/>
            <person name="Ozaki K."/>
            <person name="Hirao M."/>
            <person name="Ohmori Y."/>
            <person name="Kawabata A."/>
            <person name="Hikiji T."/>
            <person name="Kobatake N."/>
            <person name="Inagaki H."/>
            <person name="Ikema Y."/>
            <person name="Okamoto S."/>
            <person name="Okitani R."/>
            <person name="Kawakami T."/>
            <person name="Noguchi S."/>
            <person name="Itoh T."/>
            <person name="Shigeta K."/>
            <person name="Senba T."/>
            <person name="Matsumura K."/>
            <person name="Nakajima Y."/>
            <person name="Mizuno T."/>
            <person name="Morinaga M."/>
            <person name="Sasaki M."/>
            <person name="Togashi T."/>
            <person name="Oyama M."/>
            <person name="Hata H."/>
            <person name="Watanabe M."/>
            <person name="Komatsu T."/>
            <person name="Mizushima-Sugano J."/>
            <person name="Satoh T."/>
            <person name="Shirai Y."/>
            <person name="Takahashi Y."/>
            <person name="Nakagawa K."/>
            <person name="Okumura K."/>
            <person name="Nagase T."/>
            <person name="Nomura N."/>
            <person name="Kikuchi H."/>
            <person name="Masuho Y."/>
            <person name="Yamashita R."/>
            <person name="Nakai K."/>
            <person name="Yada T."/>
            <person name="Nakamura Y."/>
            <person name="Ohara O."/>
            <person name="Isogai T."/>
            <person name="Sugano S."/>
        </authorList>
    </citation>
    <scope>NUCLEOTIDE SEQUENCE [LARGE SCALE MRNA]</scope>
    <source>
        <tissue>Small intestine</tissue>
    </source>
</reference>
<reference key="5">
    <citation type="journal article" date="2004" name="Genome Res.">
        <title>The status, quality, and expansion of the NIH full-length cDNA project: the Mammalian Gene Collection (MGC).</title>
        <authorList>
            <consortium name="The MGC Project Team"/>
        </authorList>
    </citation>
    <scope>NUCLEOTIDE SEQUENCE [LARGE SCALE MRNA]</scope>
    <source>
        <tissue>Kidney</tissue>
        <tissue>Muscle</tissue>
    </source>
</reference>
<reference key="6">
    <citation type="journal article" date="1985" name="J. Inherit. Metab. Dis.">
        <title>Structure of the 5' end region of the human argininosuccinate synthetase gene.</title>
        <authorList>
            <person name="Jinno Y."/>
            <person name="Nomiyama H."/>
            <person name="Matuo S."/>
            <person name="Shimada K."/>
            <person name="Matsuda I."/>
            <person name="Saheki T."/>
        </authorList>
    </citation>
    <scope>NUCLEOTIDE SEQUENCE [GENOMIC DNA] OF 1-24</scope>
</reference>
<reference key="7">
    <citation type="journal article" date="1989" name="Protein Seq. Data Anal.">
        <title>Identification of essential arginine residue(s) for Mg-ATP binding of human argininosuccinate synthetase.</title>
        <authorList>
            <person name="Isashiki Y."/>
            <person name="Noda T."/>
            <person name="Kobayashi K."/>
            <person name="Sase M."/>
            <person name="Saheki T."/>
            <person name="Titani K."/>
        </authorList>
    </citation>
    <scope>PROTEIN SEQUENCE OF 148-161</scope>
</reference>
<reference key="8">
    <citation type="journal article" date="1997" name="Electrophoresis">
        <title>A two-dimensional gel database of human colon carcinoma proteins.</title>
        <authorList>
            <person name="Ji H."/>
            <person name="Reid G.E."/>
            <person name="Moritz R.L."/>
            <person name="Eddes J.S."/>
            <person name="Burgess A.W."/>
            <person name="Simpson R.J."/>
        </authorList>
    </citation>
    <scope>PROTEIN SEQUENCE OF 200-209</scope>
    <source>
        <tissue>Colon carcinoma</tissue>
    </source>
</reference>
<reference key="9">
    <citation type="journal article" date="1991" name="Gene">
        <title>Molecular characterization of the murine argininosuccinate synthetase locus.</title>
        <authorList>
            <person name="Surh L.C."/>
            <person name="Beaudet A.L."/>
            <person name="O'Brien W.E."/>
        </authorList>
    </citation>
    <scope>TISSUE SPECIFICITY</scope>
    <scope>DEVELOPMENTAL STAGE</scope>
</reference>
<reference key="10">
    <citation type="journal article" date="2010" name="Sci. Signal.">
        <title>Quantitative phosphoproteomics reveals widespread full phosphorylation site occupancy during mitosis.</title>
        <authorList>
            <person name="Olsen J.V."/>
            <person name="Vermeulen M."/>
            <person name="Santamaria A."/>
            <person name="Kumar C."/>
            <person name="Miller M.L."/>
            <person name="Jensen L.J."/>
            <person name="Gnad F."/>
            <person name="Cox J."/>
            <person name="Jensen T.S."/>
            <person name="Nigg E.A."/>
            <person name="Brunak S."/>
            <person name="Mann M."/>
        </authorList>
    </citation>
    <scope>PHOSPHORYLATION [LARGE SCALE ANALYSIS] AT SER-180 AND THR-219</scope>
    <scope>IDENTIFICATION BY MASS SPECTROMETRY [LARGE SCALE ANALYSIS]</scope>
    <source>
        <tissue>Cervix carcinoma</tissue>
    </source>
</reference>
<reference key="11">
    <citation type="journal article" date="2011" name="BMC Syst. Biol.">
        <title>Initial characterization of the human central proteome.</title>
        <authorList>
            <person name="Burkard T.R."/>
            <person name="Planyavsky M."/>
            <person name="Kaupe I."/>
            <person name="Breitwieser F.P."/>
            <person name="Buerckstuemmer T."/>
            <person name="Bennett K.L."/>
            <person name="Superti-Furga G."/>
            <person name="Colinge J."/>
        </authorList>
    </citation>
    <scope>IDENTIFICATION BY MASS SPECTROMETRY [LARGE SCALE ANALYSIS]</scope>
</reference>
<reference key="12">
    <citation type="journal article" date="2013" name="J. Proteome Res.">
        <title>Toward a comprehensive characterization of a human cancer cell phosphoproteome.</title>
        <authorList>
            <person name="Zhou H."/>
            <person name="Di Palma S."/>
            <person name="Preisinger C."/>
            <person name="Peng M."/>
            <person name="Polat A.N."/>
            <person name="Heck A.J."/>
            <person name="Mohammed S."/>
        </authorList>
    </citation>
    <scope>PHOSPHORYLATION [LARGE SCALE ANALYSIS] AT THR-219</scope>
    <scope>IDENTIFICATION BY MASS SPECTROMETRY [LARGE SCALE ANALYSIS]</scope>
    <source>
        <tissue>Cervix carcinoma</tissue>
    </source>
</reference>
<reference key="13">
    <citation type="journal article" date="2014" name="J. Proteomics">
        <title>An enzyme assisted RP-RPLC approach for in-depth analysis of human liver phosphoproteome.</title>
        <authorList>
            <person name="Bian Y."/>
            <person name="Song C."/>
            <person name="Cheng K."/>
            <person name="Dong M."/>
            <person name="Wang F."/>
            <person name="Huang J."/>
            <person name="Sun D."/>
            <person name="Wang L."/>
            <person name="Ye M."/>
            <person name="Zou H."/>
        </authorList>
    </citation>
    <scope>PHOSPHORYLATION [LARGE SCALE ANALYSIS] AT TYR-113 AND THR-219</scope>
    <scope>IDENTIFICATION BY MASS SPECTROMETRY [LARGE SCALE ANALYSIS]</scope>
    <source>
        <tissue>Liver</tissue>
    </source>
</reference>
<reference key="14">
    <citation type="journal article" date="2017" name="Mol. Cell">
        <title>CLOCK acetylates ASS1 to drive circadian rhythm of ureagenesis.</title>
        <authorList>
            <person name="Lin R."/>
            <person name="Mo Y."/>
            <person name="Zha H."/>
            <person name="Qu Z."/>
            <person name="Xie P."/>
            <person name="Zhu Z.J."/>
            <person name="Xu Y."/>
            <person name="Xiong Y."/>
            <person name="Guan K.L."/>
        </authorList>
    </citation>
    <scope>ACETYLATION AT LYS-165 AND LYS-176</scope>
    <scope>MUTAGENESIS OF LYS-165 AND LYS-176</scope>
    <scope>INTERACTION WITH CLOCK</scope>
    <scope>SUBCELLULAR LOCATION</scope>
</reference>
<reference key="15">
    <citation type="journal article" date="1994" name="Enzyme Protein">
        <title>Characterization of human wild-type and mutant argininosuccinate synthetase proteins expressed in bacterial cells.</title>
        <authorList>
            <person name="Shaheen N."/>
            <person name="Kobayashi K."/>
            <person name="Terazono H."/>
            <person name="Fukushige T."/>
            <person name="Horiuchi M."/>
            <person name="Saheki T."/>
        </authorList>
    </citation>
    <scope>CHARACTERIZATION OF VARIANTS CLNT1 VAL-192; ARG-280; CYS-272 AND TRP-304</scope>
    <scope>FUNCTION</scope>
    <scope>CATALYTIC ACTIVITY</scope>
    <scope>PATHWAY</scope>
</reference>
<reference key="16">
    <citation type="journal article" date="2007" name="Proc. Natl. Acad. Sci. U.S.A.">
        <title>Restructuring of the dinucleotide-binding fold in an NADP(H) sensor protein.</title>
        <authorList>
            <person name="Zheng X."/>
            <person name="Dai X."/>
            <person name="Zhao Y."/>
            <person name="Chen Q."/>
            <person name="Lu F."/>
            <person name="Yao D."/>
            <person name="Yu Q."/>
            <person name="Liu X."/>
            <person name="Zhang C."/>
            <person name="Gu X."/>
            <person name="Luo M."/>
        </authorList>
    </citation>
    <scope>INTERACTION WITH NMRAL1</scope>
</reference>
<reference key="17">
    <citation type="journal article" date="2008" name="Acta Crystallogr. D">
        <title>Structure of human argininosuccinate synthetase.</title>
        <authorList>
            <person name="Karlberg T."/>
            <person name="Collins R."/>
            <person name="van den Berg S."/>
            <person name="Flores A."/>
            <person name="Hammarstrom M."/>
            <person name="Hogbom M."/>
            <person name="Holmberg Schiavone L."/>
            <person name="Uppenberg J."/>
        </authorList>
    </citation>
    <scope>X-RAY CRYSTALLOGRAPHY (2.4 ANGSTROMS) IN COMPLEX WITH CITRULLINE AND ASPARTATE</scope>
    <scope>SUBUNIT</scope>
</reference>
<reference key="18">
    <citation type="journal article" date="1990" name="J. Biol. Chem.">
        <title>Heterogeneity of mutations in argininosuccinate synthetase causing human citrullinemia.</title>
        <authorList>
            <person name="Kobayashi K."/>
            <person name="Jackson M.J."/>
            <person name="Tick D.B."/>
            <person name="O'Brien W.E."/>
            <person name="Beaudet A.L."/>
        </authorList>
    </citation>
    <scope>INVOLVEMENT IN CTLN1</scope>
    <scope>VARIANTS CTLN1 SER-14; HIS-157; ASN-180; TRP-304; SER-324; TRP-363 AND ARG-390</scope>
</reference>
<reference key="19">
    <citation type="journal article" date="1991" name="Mol. Biol. Med.">
        <title>Additional mutations in argininosuccinate synthetase causing citrullinemia.</title>
        <authorList>
            <person name="Kobayashi K."/>
            <person name="Rosenbloom C."/>
            <person name="Beaudet A.L."/>
            <person name="O'Brien W.E."/>
        </authorList>
    </citation>
    <scope>VARIANTS CTLN1 LEU-18 AND CYS-86</scope>
</reference>
<reference key="20">
    <citation type="journal article" date="1994" name="Am. J. Hum. Genet.">
        <title>Mutations in argininosuccinate synthetase mRNA of Japanese patients, causing classical citrullinemia.</title>
        <authorList>
            <person name="Kobayashi K."/>
            <person name="Shaheen N."/>
            <person name="Terazono H."/>
            <person name="Saheki T."/>
        </authorList>
    </citation>
    <scope>VARIANTS CTLN1 THR-118; VAL-192; CYS-272; ARG-280; TRP-304 AND LEU-363</scope>
</reference>
<reference key="21">
    <citation type="journal article" date="2001" name="Mol. Genet. Metab.">
        <title>Phenotype and genotype heterogeneity in Mediterranean citrullinemia.</title>
        <authorList>
            <person name="Vilaseca M.A."/>
            <person name="Kobayashi K."/>
            <person name="Briones P."/>
            <person name="Lambruschini N."/>
            <person name="Campistol J."/>
            <person name="Tabata A."/>
            <person name="Alomar A."/>
            <person name="Rodes M."/>
            <person name="Lluch M."/>
            <person name="Saheki T."/>
        </authorList>
    </citation>
    <scope>VARIANTS CTLN1 ALA-69; LEU-108; ASP-117; ILE-119; GLN-270 AND ARG-390</scope>
</reference>
<reference key="22">
    <citation type="journal article" date="2003" name="Hum. Mutat.">
        <title>Identification of 16 novel mutations in the argininosuccinate synthetase gene and genotype-phenotype correlation in 38 classical citrullinemia patients.</title>
        <authorList>
            <person name="Gao H.-Z."/>
            <person name="Kobayashi K."/>
            <person name="Tabata A."/>
            <person name="Tsuge H."/>
            <person name="Iijima M."/>
            <person name="Yasuda T."/>
            <person name="Kalkanoglu H.S."/>
            <person name="Dursun A."/>
            <person name="Tokatli A."/>
            <person name="Coskun T."/>
            <person name="Trefz F.K."/>
            <person name="Skladal D."/>
            <person name="Mandel H."/>
            <person name="Seidel J."/>
            <person name="Kodama S."/>
            <person name="Shirane S."/>
            <person name="Ichida T."/>
            <person name="Makino S."/>
            <person name="Yoshino M."/>
            <person name="Kang J.-H."/>
            <person name="Mizuguchi M."/>
            <person name="Barshop B.A."/>
            <person name="Fuchinoue S."/>
            <person name="Seneca S."/>
            <person name="Zeesman S."/>
            <person name="Knerr I."/>
            <person name="Rodes M."/>
            <person name="Wasant P."/>
            <person name="Yoshida I."/>
            <person name="De Meirleir L."/>
            <person name="Abdul-Jalil M."/>
            <person name="Begum L."/>
            <person name="Horiuchi M."/>
            <person name="Katunuma N."/>
            <person name="Nakagawa S."/>
            <person name="Saheki T."/>
        </authorList>
    </citation>
    <scope>VARIANTS CTLN1 ARG-19; HIS-86; SER-95; SER-96; ASP-117; SER-117; CYS-157; ARG-179; LYS-191; HIS-265; MET-269; CYS-272; LYS-283; TRP-304; GLN-310; SER-324; VAL-362; GLN-363; TRP-363; ILE-389 AND ARG-390</scope>
</reference>
<reference key="23">
    <citation type="journal article" date="2003" name="Mol. Genet. Metab.">
        <title>Mild citrullinemia in Caucasians is an allelic variant of argininosuccinate synthetase deficiency (citrullinemia type 1).</title>
        <authorList>
            <person name="Haeberle J."/>
            <person name="Pauli S."/>
            <person name="Schmidt E."/>
            <person name="Schulze-Eilfing B."/>
            <person name="Berning C."/>
            <person name="Koch H.G."/>
        </authorList>
    </citation>
    <scope>VARIANTS CTLN1 SER-14; LEU-40; GLN-127; ARG-179; ASP-190; GLU-202; MET-263; MET-269; SER-324; GLY-345 AND VAL-362</scope>
</reference>
<reference key="24">
    <citation type="journal article" date="2005" name="Obstet. Gynecol.">
        <title>Postpartum 'psychosis' in mild argininosuccinate synthetase deficiency.</title>
        <authorList>
            <person name="Enns G.M."/>
            <person name="O'Brien W.E."/>
            <person name="Kobayashi K."/>
            <person name="Shinzawa H."/>
            <person name="Pellegrino J.E."/>
        </authorList>
    </citation>
    <scope>VARIANT CTLN1 ARG-310</scope>
</reference>
<reference key="25">
    <citation type="journal article" date="2006" name="Prenat. Diagn.">
        <title>Prenatal diagnosis of citrullinemia and argininosuccinic aciduria: evidence for a transmission ratio distortion in citrullinemia.</title>
        <authorList>
            <person name="Kleijer W.J."/>
            <person name="Garritsen V.H."/>
            <person name="van der Sterre M.L."/>
            <person name="Berning C."/>
            <person name="Haeberle J."/>
            <person name="Huijmans J.G.M."/>
        </authorList>
    </citation>
    <scope>VARIANTS CTLN1 ASN-124; HIS-157; GLN-270; GLN-279; LYS-283; SER-324; GLY-363 AND ARG-390</scope>
</reference>
<reference key="26">
    <citation type="journal article" date="2008" name="Hum. Mutat.">
        <title>Investigation of citrullinemia type I variants by in vitro expression studies.</title>
        <authorList>
            <person name="Berning C."/>
            <person name="Bieger I."/>
            <person name="Pauli S."/>
            <person name="Vermeulen T."/>
            <person name="Vogl T."/>
            <person name="Rummel T."/>
            <person name="Hoehne W."/>
            <person name="Koch H.G."/>
            <person name="Rolinski B."/>
            <person name="Gempel K."/>
            <person name="Haeberle J."/>
        </authorList>
    </citation>
    <scope>VARIANTS CTLN1 CYS-265 AND VAL-302</scope>
    <scope>CHARACTERIZATION OF VARIANTS CTLN1 THR-118; ARG-179; VAL-263; CYS-265; VAL-302; SER-324; VAL-362 AND ARG-390</scope>
    <scope>FUNCTION</scope>
    <scope>CATALYTIC ACTIVITY</scope>
    <scope>PATHWAY</scope>
    <scope>BIOPHYSICOCHEMICAL PROPERTIES</scope>
</reference>
<reference key="27">
    <citation type="journal article" date="2009" name="Hum. Mutat.">
        <title>Mutations and polymorphisms in the human argininosuccinate synthetase (ASS1) gene.</title>
        <authorList>
            <person name="Engel K."/>
            <person name="Hoehne W."/>
            <person name="Haeberle J."/>
        </authorList>
    </citation>
    <scope>VARIANTS CTLN1 PRO-79; HIS-96; GLN-127; TRP-127; PRO-160; GLN-191; PRO-206; CYS-265; THR-277; ILE-284; SER-291; GLY-296; VAL-324; PHE-341; ARG-347 AND ASP-359</scope>
</reference>
<reference key="28">
    <citation type="journal article" date="2014" name="Brain Dev.">
        <title>Prenatal diagnosis of citrullinemia type 1: a Chinese family with a novel mutation of the ASS1 gene.</title>
        <authorList>
            <person name="Wu T.F."/>
            <person name="Liu Y.P."/>
            <person name="Li X.Y."/>
            <person name="Wang Q."/>
            <person name="Song J.Q."/>
            <person name="Yang Y.L."/>
        </authorList>
    </citation>
    <scope>VARIANTS CTLN1 LYS-283 AND ARG-337</scope>
</reference>
<reference key="29">
    <citation type="journal article" date="2014" name="Mol. Genet. Metab.">
        <title>Improved standards for prenatal diagnosis of citrullinemia.</title>
        <authorList>
            <person name="Miller M.J."/>
            <person name="Soler-Alfonso C.R."/>
            <person name="Grund J.E."/>
            <person name="Fang P."/>
            <person name="Sun Q."/>
            <person name="Elsea S.H."/>
            <person name="Sutton V.R."/>
        </authorList>
    </citation>
    <scope>VARIANTS CTLN1 PRO-91; CYS-157; ILE-180; LYS-283 AND ARG-390</scope>
    <scope>VARIANT LEU-127</scope>
</reference>
<reference key="30">
    <citation type="journal article" date="2015" name="Clin. Chim. Acta">
        <title>Functional analysis of novel splicing and missense mutations identified in the ASS1 gene in classical citrullinemia patients.</title>
        <authorList>
            <person name="Kimani J.K."/>
            <person name="Wei T."/>
            <person name="Chol K."/>
            <person name="Li Y."/>
            <person name="Yu P."/>
            <person name="Ye S."/>
            <person name="Huang X."/>
            <person name="Qi M."/>
        </authorList>
    </citation>
    <scope>VARIANTS CTLN1 GLY-141 AND CYS-265</scope>
</reference>
<reference key="31">
    <citation type="journal article" date="2016" name="J. Med. Genet.">
        <title>Kinetic mutations in argininosuccinate synthetase deficiency: characterisation and in vitro correction by substrate supplementation.</title>
        <authorList>
            <person name="Diez-Fernandez C."/>
            <person name="Wellauer O."/>
            <person name="Gemperle C."/>
            <person name="Ruefenacht V."/>
            <person name="Fingerhut R."/>
            <person name="Haeberle J."/>
        </authorList>
    </citation>
    <scope>VARIANTS CTLN1 PRO-91; LEU-96; SER-117; THR-118; ILE-119; ASN-124; CYS-157; HIS-157; CYS-272; HIS-272 AND LEU-272</scope>
    <scope>CHARACTERIZATION OF VARIANTS CTLN1 PRO-91; SER-95; HIS-96; LEU-96; SER-96; SER-117; THR-118; ILE-119; ASN-124; GLN-127; TRP-127; CYS-157; HIS-157; ASN-180; ILE-180; GLN-191; GLN-270; CYS-272; HIS-272 AND LEU-272</scope>
    <scope>CHARACTERIZATION OF VARIANT LEU-127</scope>
    <scope>CATALYTIC ACTIVITY</scope>
    <scope>PATHWAY</scope>
    <scope>FUNCTION</scope>
    <scope>SUBCELLULAR LOCATION</scope>
</reference>
<reference key="32">
    <citation type="journal article" date="2017" name="Hum. Mutat.">
        <title>Mutations in the human argininosuccinate synthetase (ASS1) gene, impact on patients, common changes, and structural considerations.</title>
        <authorList>
            <person name="Diez-Fernandez C."/>
            <person name="Ruefenacht V."/>
            <person name="Haeberle J."/>
        </authorList>
    </citation>
    <scope>VARIANTS CTLN1 27-GLN--LYS-412 DEL; ILE-64; PRO-79; 97-CYS--LYS-412 DEL; CYS-100; HIS-100; ASP-111; CYS-117; 138-GLN--LYS-412 DEL; SER-157; PRO-160; 163-TYR--LYS-412 DEL; PRO-164; LYS-184; ASP-190; PRO-206; ARG-230; ILE-237; PRO-258; VAL-258; CYS-265; 275-GLY--LYS-412 DEL; THR-277; 279-ARG--LYS-412 DEL; ILE-284; PRO-290; SER-291; GLY-296; ASP-299; VAL-302; GLY-306; CYS-307; 311-GLN--LYS-412 DEL; MET-321; SER-324; VAL-324; HIS-335; PHE-341; 344-ARG--LYS-412 DEL; ARG-347; VAL-356; 357-GLN--LYS-412 DEL; ASP-359; 380-GLN--LYS-412 DEL AND PRO-389</scope>
</reference>
<feature type="chain" id="PRO_0000148554" description="Argininosuccinate synthase">
    <location>
        <begin position="1"/>
        <end position="412"/>
    </location>
</feature>
<feature type="binding site" evidence="1">
    <location>
        <begin position="10"/>
        <end position="18"/>
    </location>
    <ligand>
        <name>ATP</name>
        <dbReference type="ChEBI" id="CHEBI:30616"/>
    </ligand>
</feature>
<feature type="binding site" evidence="1">
    <location>
        <position position="36"/>
    </location>
    <ligand>
        <name>ATP</name>
        <dbReference type="ChEBI" id="CHEBI:30616"/>
    </ligand>
</feature>
<feature type="binding site" evidence="12">
    <location>
        <position position="87"/>
    </location>
    <ligand>
        <name>L-citrulline</name>
        <dbReference type="ChEBI" id="CHEBI:57743"/>
    </ligand>
</feature>
<feature type="binding site" evidence="12">
    <location>
        <position position="92"/>
    </location>
    <ligand>
        <name>L-citrulline</name>
        <dbReference type="ChEBI" id="CHEBI:57743"/>
    </ligand>
</feature>
<feature type="binding site" evidence="1">
    <location>
        <begin position="115"/>
        <end position="123"/>
    </location>
    <ligand>
        <name>ATP</name>
        <dbReference type="ChEBI" id="CHEBI:30616"/>
    </ligand>
</feature>
<feature type="binding site" evidence="12">
    <location>
        <position position="119"/>
    </location>
    <ligand>
        <name>L-aspartate</name>
        <dbReference type="ChEBI" id="CHEBI:29991"/>
    </ligand>
</feature>
<feature type="binding site" evidence="12">
    <location>
        <position position="123"/>
    </location>
    <ligand>
        <name>L-aspartate</name>
        <dbReference type="ChEBI" id="CHEBI:29991"/>
    </ligand>
</feature>
<feature type="binding site" evidence="12">
    <location>
        <position position="123"/>
    </location>
    <ligand>
        <name>L-citrulline</name>
        <dbReference type="ChEBI" id="CHEBI:57743"/>
    </ligand>
</feature>
<feature type="binding site" evidence="12">
    <location>
        <position position="124"/>
    </location>
    <ligand>
        <name>L-aspartate</name>
        <dbReference type="ChEBI" id="CHEBI:29991"/>
    </ligand>
</feature>
<feature type="binding site" evidence="12">
    <location>
        <position position="127"/>
    </location>
    <ligand>
        <name>L-citrulline</name>
        <dbReference type="ChEBI" id="CHEBI:57743"/>
    </ligand>
</feature>
<feature type="binding site" evidence="12">
    <location>
        <position position="180"/>
    </location>
    <ligand>
        <name>L-citrulline</name>
        <dbReference type="ChEBI" id="CHEBI:57743"/>
    </ligand>
</feature>
<feature type="binding site" evidence="12">
    <location>
        <position position="189"/>
    </location>
    <ligand>
        <name>L-citrulline</name>
        <dbReference type="ChEBI" id="CHEBI:57743"/>
    </ligand>
</feature>
<feature type="binding site" evidence="12">
    <location>
        <position position="270"/>
    </location>
    <ligand>
        <name>L-citrulline</name>
        <dbReference type="ChEBI" id="CHEBI:57743"/>
    </ligand>
</feature>
<feature type="binding site" evidence="12">
    <location>
        <position position="282"/>
    </location>
    <ligand>
        <name>L-citrulline</name>
        <dbReference type="ChEBI" id="CHEBI:57743"/>
    </ligand>
</feature>
<feature type="modified residue" description="Phosphotyrosine" evidence="2">
    <location>
        <position position="87"/>
    </location>
</feature>
<feature type="modified residue" description="N6-acetyllysine" evidence="3">
    <location>
        <position position="112"/>
    </location>
</feature>
<feature type="modified residue" description="Phosphotyrosine" evidence="32">
    <location>
        <position position="113"/>
    </location>
</feature>
<feature type="modified residue" description="N6-acetyllysine; by CLOCK" evidence="22">
    <location>
        <position position="165"/>
    </location>
</feature>
<feature type="modified residue" description="N6-acetyllysine; by CLOCK" evidence="22">
    <location>
        <position position="176"/>
    </location>
</feature>
<feature type="modified residue" description="Phosphoserine" evidence="30">
    <location>
        <position position="180"/>
    </location>
</feature>
<feature type="modified residue" description="Phosphothreonine" evidence="30 31 32">
    <location>
        <position position="219"/>
    </location>
</feature>
<feature type="sequence variant" id="VAR_000681" description="In CTLN1; dbSNP:rs121908636." evidence="7 16">
    <original>G</original>
    <variation>S</variation>
    <location>
        <position position="14"/>
    </location>
</feature>
<feature type="sequence variant" id="VAR_000682" description="In CTLN1; dbSNP:rs121908643." evidence="15">
    <original>S</original>
    <variation>L</variation>
    <location>
        <position position="18"/>
    </location>
</feature>
<feature type="sequence variant" id="VAR_015891" description="In CTLN1." evidence="6">
    <original>C</original>
    <variation>R</variation>
    <location>
        <position position="19"/>
    </location>
</feature>
<feature type="sequence variant" id="VAR_078387" description="In CTLN1." evidence="21">
    <location>
        <begin position="27"/>
        <end position="412"/>
    </location>
</feature>
<feature type="sequence variant" id="VAR_058337" description="In CTLN1." evidence="7">
    <original>Q</original>
    <variation>L</variation>
    <location>
        <position position="40"/>
    </location>
</feature>
<feature type="sequence variant" id="VAR_078388" description="In CTLN1; uncertain significance; dbSNP:rs556297791." evidence="21">
    <original>V</original>
    <variation>I</variation>
    <location>
        <position position="64"/>
    </location>
</feature>
<feature type="sequence variant" id="VAR_016013" description="In CTLN1; dbSNP:rs771594651." evidence="4">
    <original>V</original>
    <variation>A</variation>
    <location>
        <position position="69"/>
    </location>
</feature>
<feature type="sequence variant" id="VAR_058338" description="In CTLN1." evidence="14 21">
    <original>S</original>
    <variation>P</variation>
    <location>
        <position position="79"/>
    </location>
</feature>
<feature type="sequence variant" id="VAR_000683" description="In CTLN1; dbSNP:rs121908644." evidence="15">
    <original>R</original>
    <variation>C</variation>
    <location>
        <position position="86"/>
    </location>
</feature>
<feature type="sequence variant" id="VAR_015892" description="In CTLN1; dbSNP:rs575001023." evidence="6">
    <original>R</original>
    <variation>H</variation>
    <location>
        <position position="86"/>
    </location>
</feature>
<feature type="sequence variant" id="VAR_078389" description="In CTLN1; decreased affinity for aspartate; decreased affinity for citrulline; decreased argininosuccinate synthase activity; dbSNP:rs769018733." evidence="18 20">
    <original>T</original>
    <variation>P</variation>
    <location>
        <position position="91"/>
    </location>
</feature>
<feature type="sequence variant" id="VAR_015893" description="In CTLN1; increased thermal stability; loss of argininosuccinate synthase activity." evidence="6 20">
    <original>R</original>
    <variation>S</variation>
    <location>
        <position position="95"/>
    </location>
</feature>
<feature type="sequence variant" id="VAR_058339" description="In CTLN1; decreased affinity for aspartate; decreased affinity for citrulline; decreased argininosuccinate synthase activity." evidence="14 20">
    <original>P</original>
    <variation>H</variation>
    <location>
        <position position="96"/>
    </location>
</feature>
<feature type="sequence variant" id="VAR_078390" description="In CTLN1; decreased thermal stability; decreased affinity for aspartate; decreased affinity for citrulline; loss of argininosuccinate synthase activity." evidence="20">
    <original>P</original>
    <variation>L</variation>
    <location>
        <position position="96"/>
    </location>
</feature>
<feature type="sequence variant" id="VAR_015894" description="In CTLN1; no effect on thermal stability; decreased argininosuccinate synthase activity." evidence="6 20">
    <original>P</original>
    <variation>S</variation>
    <location>
        <position position="96"/>
    </location>
</feature>
<feature type="sequence variant" id="VAR_078391" description="In CTLN1." evidence="21">
    <location>
        <begin position="97"/>
        <end position="412"/>
    </location>
</feature>
<feature type="sequence variant" id="VAR_078392" description="In CTLN1; dbSNP:rs370695114." evidence="21">
    <original>R</original>
    <variation>C</variation>
    <location>
        <position position="100"/>
    </location>
</feature>
<feature type="sequence variant" id="VAR_078393" description="In CTLN1; dbSNP:rs138279074." evidence="21">
    <original>R</original>
    <variation>H</variation>
    <location>
        <position position="100"/>
    </location>
</feature>
<feature type="sequence variant" id="VAR_016014" description="In CTLN1; dbSNP:rs35269064." evidence="4 5">
    <original>R</original>
    <variation>L</variation>
    <location>
        <position position="108"/>
    </location>
</feature>
<feature type="sequence variant" id="VAR_078394" description="In CTLN1." evidence="21">
    <original>A</original>
    <variation>D</variation>
    <location>
        <position position="111"/>
    </location>
</feature>
<feature type="sequence variant" id="VAR_078395" description="In CTLN1." evidence="21">
    <original>G</original>
    <variation>C</variation>
    <location>
        <position position="117"/>
    </location>
</feature>
<feature type="sequence variant" id="VAR_015896" description="In CTLN1." evidence="4 6">
    <original>G</original>
    <variation>D</variation>
    <location>
        <position position="117"/>
    </location>
</feature>
<feature type="sequence variant" id="VAR_015895" description="In CTLN1; decreased thermal stability; loss of argininosuccinate synthase activity; dbSNP:rs770944877." evidence="6 20">
    <original>G</original>
    <variation>S</variation>
    <location>
        <position position="117"/>
    </location>
</feature>
<feature type="sequence variant" id="VAR_000684" description="In CTLN1; decreased thermal stability; decreased affinity for aspartate; decreased affinity for citrulline; decreased argininosuccinate synthase activity; dbSNP:rs775305020." evidence="13 20 23">
    <original>A</original>
    <variation>T</variation>
    <location>
        <position position="118"/>
    </location>
</feature>
<feature type="sequence variant" id="VAR_016015" description="In CTLN1; decreased thermal stability; loss of argininosuccinate synthase activity." evidence="4 20">
    <original>T</original>
    <variation>I</variation>
    <location>
        <position position="119"/>
    </location>
</feature>
<feature type="sequence variant" id="VAR_058340" description="In CTLN1; loss of argininosuccinate synthase activity; dbSNP:rs936192871." evidence="9 20">
    <original>D</original>
    <variation>N</variation>
    <location>
        <position position="124"/>
    </location>
</feature>
<feature type="sequence variant" id="VAR_078396" description="Increased thermal stability; loss of argininosuccinate synthase activity; dbSNP:rs201623252." evidence="18 20">
    <original>R</original>
    <variation>L</variation>
    <location>
        <position position="127"/>
    </location>
</feature>
<feature type="sequence variant" id="VAR_058341" description="In CTLN1; increased thermal stability; loss of argininosuccinate synthase activity; dbSNP:rs201623252." evidence="7 14 20">
    <original>R</original>
    <variation>Q</variation>
    <location>
        <position position="127"/>
    </location>
</feature>
<feature type="sequence variant" id="VAR_058342" description="In CTLN1; severe clinical course; loss of argininosuccinate synthase activity; dbSNP:rs771794639." evidence="14 20">
    <original>R</original>
    <variation>W</variation>
    <location>
        <position position="127"/>
    </location>
</feature>
<feature type="sequence variant" id="VAR_078397" description="In CTLN1." evidence="21">
    <location>
        <begin position="138"/>
        <end position="412"/>
    </location>
</feature>
<feature type="sequence variant" id="VAR_072792" description="In CTLN1; dbSNP:rs1184442048." evidence="19">
    <original>V</original>
    <variation>G</variation>
    <location>
        <position position="141"/>
    </location>
</feature>
<feature type="sequence variant" id="VAR_015897" description="In CTLN1; decreased thermal stability; loss of argininosuccinate synthase activity; dbSNP:rs770585183." evidence="6 18 20">
    <original>R</original>
    <variation>C</variation>
    <location>
        <position position="157"/>
    </location>
</feature>
<feature type="sequence variant" id="VAR_000685" description="In CTLN1; loss of argininosuccinate synthase activity; dbSNP:rs121908637." evidence="9 16 20">
    <original>R</original>
    <variation>H</variation>
    <location>
        <position position="157"/>
    </location>
</feature>
<feature type="sequence variant" id="VAR_078398" description="In CTLN1." evidence="21">
    <original>R</original>
    <variation>S</variation>
    <location>
        <position position="157"/>
    </location>
</feature>
<feature type="sequence variant" id="VAR_058343" description="In CTLN1; dbSNP:rs969835605." evidence="14 21">
    <original>L</original>
    <variation>P</variation>
    <location>
        <position position="160"/>
    </location>
</feature>
<feature type="sequence variant" id="VAR_078399" description="In CTLN1." evidence="21">
    <location>
        <begin position="163"/>
        <end position="412"/>
    </location>
</feature>
<feature type="sequence variant" id="VAR_078400" description="In CTLN1." evidence="21">
    <original>A</original>
    <variation>P</variation>
    <location>
        <position position="164"/>
    </location>
</feature>
<feature type="sequence variant" id="VAR_015898" description="In CTLN1; mild; decreased affinity for aspartate; decreased affinity for citrulline; decreased argininosuccinate synthase activity; dbSNP:rs121908646." evidence="5 6 7 13">
    <original>W</original>
    <variation>R</variation>
    <location>
        <position position="179"/>
    </location>
</feature>
<feature type="sequence variant" id="VAR_078401" description="In CTLN1; increased thermal stability; loss of argininosuccinate synthase activity; dbSNP:rs121908638." evidence="18 20">
    <original>S</original>
    <variation>I</variation>
    <location>
        <position position="180"/>
    </location>
</feature>
<feature type="sequence variant" id="VAR_000686" description="In CTLN1; decreased thermal stability; decreased affinity for aspartate; decreased affinity for citrulline; decreased argininosuccinate synthase activity; dbSNP:rs121908638." evidence="16 20">
    <original>S</original>
    <variation>N</variation>
    <location>
        <position position="180"/>
    </location>
</feature>
<feature type="sequence variant" id="VAR_078402" description="In CTLN1; dbSNP:rs368192467." evidence="21">
    <original>N</original>
    <variation>K</variation>
    <location>
        <position position="184"/>
    </location>
</feature>
<feature type="sequence variant" id="VAR_058344" description="In CTLN1." evidence="7 21">
    <original>Y</original>
    <variation>D</variation>
    <location>
        <position position="190"/>
    </location>
</feature>
<feature type="sequence variant" id="VAR_015899" description="In CTLN1; dbSNP:rs777828000." evidence="6">
    <original>E</original>
    <variation>K</variation>
    <location>
        <position position="191"/>
    </location>
</feature>
<feature type="sequence variant" id="VAR_058345" description="In CTLN1; loss of argininosuccinate synthase activity." evidence="14 20">
    <original>E</original>
    <variation>Q</variation>
    <location>
        <position position="191"/>
    </location>
</feature>
<feature type="sequence variant" id="VAR_000687" description="In CTLN1; decreased protein abundance." evidence="23 24">
    <original>A</original>
    <variation>V</variation>
    <location>
        <position position="192"/>
    </location>
</feature>
<feature type="sequence variant" id="VAR_058346" description="In CTLN1; dbSNP:rs376371866." evidence="7">
    <original>A</original>
    <variation>E</variation>
    <location>
        <position position="202"/>
    </location>
</feature>
<feature type="sequence variant" id="VAR_058347" description="In CTLN1." evidence="14 21">
    <original>L</original>
    <variation>P</variation>
    <location>
        <position position="206"/>
    </location>
</feature>
<feature type="sequence variant" id="VAR_078403" description="In CTLN1." evidence="21">
    <original>G</original>
    <variation>R</variation>
    <location>
        <position position="230"/>
    </location>
</feature>
<feature type="sequence variant" id="VAR_078404" description="In CTLN1." evidence="21">
    <original>N</original>
    <variation>I</variation>
    <location>
        <position position="237"/>
    </location>
</feature>
<feature type="sequence variant" id="VAR_078405" description="In CTLN1." evidence="21">
    <original>A</original>
    <variation>P</variation>
    <location>
        <position position="258"/>
    </location>
</feature>
<feature type="sequence variant" id="VAR_078406" description="In CTLN1; dbSNP:rs753078725." evidence="21">
    <original>A</original>
    <variation>V</variation>
    <location>
        <position position="258"/>
    </location>
</feature>
<feature type="sequence variant" id="VAR_058348" description="In CTLN1; mild clinical course; no effect on affinity for aspartate; no effect on affinity for citrulline; decreased argininosuccinate synthase activity; dbSNP:rs192838388." evidence="7 13">
    <original>V</original>
    <variation>M</variation>
    <location>
        <position position="263"/>
    </location>
</feature>
<feature type="sequence variant" id="VAR_058349" description="In CTLN1; severe clinical course; loss of argininosuccinate synthase activity; dbSNP:rs148918985." evidence="13 14 19 21">
    <original>R</original>
    <variation>C</variation>
    <location>
        <position position="265"/>
    </location>
</feature>
<feature type="sequence variant" id="VAR_015900" description="In CTLN1; dbSNP:rs398123131." evidence="6">
    <original>R</original>
    <variation>H</variation>
    <location>
        <position position="265"/>
    </location>
</feature>
<feature type="sequence variant" id="VAR_015901" description="In CTLN1; dbSNP:rs370595480." evidence="6 7">
    <original>V</original>
    <variation>M</variation>
    <location>
        <position position="269"/>
    </location>
</feature>
<feature type="sequence variant" id="VAR_016007" description="In CTLN1; loss of argininosuccinate synthase activity; dbSNP:rs775163147." evidence="4 9 20">
    <original>E</original>
    <variation>Q</variation>
    <location>
        <position position="270"/>
    </location>
</feature>
<feature type="sequence variant" id="VAR_000688" description="In CTLN1; increased thermal stability; decreased affinity for aspartate; decreased affinity for citrulline; decreased argininosuccinate synthase activity; dbSNP:rs762387914." evidence="6 20 23 24">
    <original>R</original>
    <variation>C</variation>
    <location>
        <position position="272"/>
    </location>
</feature>
<feature type="sequence variant" id="VAR_078407" description="In CTLN1; increased thermal stability; decreased affinity for aspartate; decreased affinity for citrulline; decreased argininosuccinate synthase activity; dbSNP:rs768215008." evidence="20">
    <original>R</original>
    <variation>H</variation>
    <location>
        <position position="272"/>
    </location>
</feature>
<feature type="sequence variant" id="VAR_078408" description="In CTLN1; increased thermal stability; decreased affinity for aspartate; decreased affinity for citrulline; decreased argininosuccinate synthase activity; dbSNP:rs768215008." evidence="20">
    <original>R</original>
    <variation>L</variation>
    <location>
        <position position="272"/>
    </location>
</feature>
<feature type="sequence variant" id="VAR_078409" description="In CTLN1." evidence="21">
    <location>
        <begin position="275"/>
        <end position="412"/>
    </location>
</feature>
<feature type="sequence variant" id="VAR_058350" description="In CTLN1." evidence="14 21">
    <original>K</original>
    <variation>T</variation>
    <location>
        <position position="277"/>
    </location>
</feature>
<feature type="sequence variant" id="VAR_078410" description="In CTLN1." evidence="21">
    <location>
        <begin position="279"/>
        <end position="412"/>
    </location>
</feature>
<feature type="sequence variant" id="VAR_016008" description="In CTLN1; dbSNP:rs371265106." evidence="9">
    <original>R</original>
    <variation>Q</variation>
    <location>
        <position position="279"/>
    </location>
</feature>
<feature type="sequence variant" id="VAR_000689" description="In CTLN1; loss of argininosuccinate synthase activity." evidence="23 24">
    <original>G</original>
    <variation>R</variation>
    <location>
        <position position="280"/>
    </location>
</feature>
<feature type="sequence variant" id="VAR_015902" description="In CTLN1; dbSNP:rs765338121." evidence="6 9 17 18">
    <original>E</original>
    <variation>K</variation>
    <location>
        <position position="283"/>
    </location>
</feature>
<feature type="sequence variant" id="VAR_058351" description="In CTLN1; mild clinical course; dbSNP:rs886039853." evidence="14 21">
    <original>T</original>
    <variation>I</variation>
    <location>
        <position position="284"/>
    </location>
</feature>
<feature type="sequence variant" id="VAR_078411" description="In CTLN1." evidence="21">
    <original>L</original>
    <variation>P</variation>
    <location>
        <position position="290"/>
    </location>
</feature>
<feature type="sequence variant" id="VAR_058352" description="In CTLN1." evidence="14 21">
    <original>Y</original>
    <variation>S</variation>
    <location>
        <position position="291"/>
    </location>
</feature>
<feature type="sequence variant" id="VAR_058353" description="In CTLN1." evidence="14 21">
    <original>D</original>
    <variation>G</variation>
    <location>
        <position position="296"/>
    </location>
</feature>
<feature type="sequence variant" id="VAR_078412" description="In CTLN1; dbSNP:rs768394647." evidence="21">
    <original>A</original>
    <variation>D</variation>
    <location>
        <position position="299"/>
    </location>
</feature>
<feature type="sequence variant" id="VAR_058354" description="In CTLN1; no effect on affinity for aspartate; no effect on affinity for citrulline; decreased argininosuccinate synthase activity." evidence="13 21">
    <original>M</original>
    <variation>V</variation>
    <location>
        <position position="302"/>
    </location>
</feature>
<feature type="sequence variant" id="VAR_000690" description="In CTLN1; decreased protein abundance; dbSNP:rs121908642." evidence="6 16 23">
    <original>R</original>
    <variation>W</variation>
    <location>
        <position position="304"/>
    </location>
</feature>
<feature type="sequence variant" id="VAR_078413" description="In CTLN1." evidence="21">
    <original>V</original>
    <variation>G</variation>
    <location>
        <position position="306"/>
    </location>
</feature>
<feature type="sequence variant" id="VAR_058355" description="In CTLN1; dbSNP:rs183276875." evidence="21">
    <original>R</original>
    <variation>C</variation>
    <location>
        <position position="307"/>
    </location>
</feature>
<feature type="sequence variant" id="VAR_016009" description="In CTLN1; dbSNP:rs121908648." evidence="6">
    <original>K</original>
    <variation>Q</variation>
    <location>
        <position position="310"/>
    </location>
</feature>
<feature type="sequence variant" id="VAR_015903" description="In CTLN1; dbSNP:rs199751308." evidence="8">
    <original>K</original>
    <variation>R</variation>
    <location>
        <position position="310"/>
    </location>
</feature>
<feature type="sequence variant" id="VAR_078414" description="In CTLN1." evidence="21">
    <location>
        <begin position="311"/>
        <end position="412"/>
    </location>
</feature>
<feature type="sequence variant" id="VAR_078415" description="In CTLN1; dbSNP:rs727503813." evidence="21">
    <original>V</original>
    <variation>M</variation>
    <location>
        <position position="321"/>
    </location>
</feature>
<feature type="sequence variant" id="VAR_000691" description="In CTLN1; loss of argininosuccinate synthase activity; dbSNP:rs121908639." evidence="6 7 9 13 16 21">
    <original>G</original>
    <variation>S</variation>
    <location>
        <position position="324"/>
    </location>
</feature>
<feature type="sequence variant" id="VAR_058356" description="In CTLN1." evidence="14 21">
    <original>G</original>
    <variation>V</variation>
    <location>
        <position position="324"/>
    </location>
</feature>
<feature type="sequence variant" id="VAR_078416" description="In CTLN1; dbSNP:rs555388438." evidence="21">
    <original>R</original>
    <variation>H</variation>
    <location>
        <position position="335"/>
    </location>
</feature>
<feature type="sequence variant" id="VAR_078417" description="In CTLN1." evidence="17">
    <original>C</original>
    <variation>R</variation>
    <location>
        <position position="337"/>
    </location>
</feature>
<feature type="sequence variant" id="VAR_058357" description="In CTLN1." evidence="14 21">
    <original>S</original>
    <variation>F</variation>
    <location>
        <position position="341"/>
    </location>
</feature>
<feature type="sequence variant" id="VAR_078418" description="In CTLN1." evidence="21">
    <location>
        <begin position="344"/>
        <end position="412"/>
    </location>
</feature>
<feature type="sequence variant" id="VAR_058358" description="In CTLN1." evidence="7">
    <original>V</original>
    <variation>G</variation>
    <location>
        <position position="345"/>
    </location>
</feature>
<feature type="sequence variant" id="VAR_058359" description="In CTLN1; severe clinical course." evidence="14 21">
    <original>G</original>
    <variation>R</variation>
    <location>
        <position position="347"/>
    </location>
</feature>
<feature type="sequence variant" id="VAR_078419" description="In CTLN1." evidence="21">
    <original>G</original>
    <variation>V</variation>
    <location>
        <position position="356"/>
    </location>
</feature>
<feature type="sequence variant" id="VAR_078420" description="In CTLN1." evidence="21">
    <location>
        <begin position="357"/>
        <end position="412"/>
    </location>
</feature>
<feature type="sequence variant" id="VAR_058360" description="In CTLN1; mild clinical course." evidence="14 21">
    <original>Y</original>
    <variation>D</variation>
    <location>
        <position position="359"/>
    </location>
</feature>
<feature type="sequence variant" id="VAR_015904" description="In CTLN1; mild; no effect on affinity for aspartate; no effect on affinity for citrulline; decreased argininosuccinate synthase activity; dbSNP:rs121908647." evidence="5 6 7 13">
    <original>G</original>
    <variation>V</variation>
    <location>
        <position position="362"/>
    </location>
</feature>
<feature type="sequence variant" id="VAR_016010" description="In CTLN1." evidence="9">
    <original>R</original>
    <variation>G</variation>
    <location>
        <position position="363"/>
    </location>
</feature>
<feature type="sequence variant" id="VAR_000692" description="In CTLN1." evidence="23">
    <original>R</original>
    <variation>L</variation>
    <location>
        <position position="363"/>
    </location>
</feature>
<feature type="sequence variant" id="VAR_016011" description="In CTLN1; dbSNP:rs771937610." evidence="6">
    <original>R</original>
    <variation>Q</variation>
    <location>
        <position position="363"/>
    </location>
</feature>
<feature type="sequence variant" id="VAR_000693" description="In CTLN1; dbSNP:rs121908640." evidence="6 16">
    <original>R</original>
    <variation>W</variation>
    <location>
        <position position="363"/>
    </location>
</feature>
<feature type="sequence variant" id="VAR_078421" description="In CTLN1." evidence="21">
    <location>
        <begin position="380"/>
        <end position="412"/>
    </location>
</feature>
<feature type="sequence variant" id="VAR_016012" description="In CTLN1; dbSNP:rs1474017319." evidence="6">
    <original>T</original>
    <variation>I</variation>
    <location>
        <position position="389"/>
    </location>
</feature>
<feature type="sequence variant" id="VAR_078422" description="In CTLN1." evidence="21">
    <original>T</original>
    <variation>P</variation>
    <location>
        <position position="389"/>
    </location>
</feature>
<feature type="sequence variant" id="VAR_000694" description="In CTLN1; loss of argininosuccinate synthase activity; dbSNP:rs121908641." evidence="4 5 6 9 13 16 18">
    <original>G</original>
    <variation>R</variation>
    <location>
        <position position="390"/>
    </location>
</feature>
<feature type="mutagenesis site" description="Significant loss of acetylation but no decrease in enzyme activity; when associated with Q-176 or R-176." evidence="22">
    <original>K</original>
    <variation>Q</variation>
    <variation>R</variation>
    <location>
        <position position="165"/>
    </location>
</feature>
<feature type="mutagenesis site" description="Significant loss of acetylation but no decrease in enzyme activity; when associated with Q-165 or R-165." evidence="22">
    <original>K</original>
    <variation>Q</variation>
    <variation>R</variation>
    <location>
        <position position="176"/>
    </location>
</feature>
<feature type="sequence conflict" description="In Ref. 1; CAA25771 and 2; AAA51783." evidence="25" ref="1 2">
    <original>FWH</original>
    <variation>LRP</variation>
    <location>
        <begin position="325"/>
        <end position="327"/>
    </location>
</feature>
<feature type="strand" evidence="33">
    <location>
        <begin position="5"/>
        <end position="10"/>
    </location>
</feature>
<feature type="helix" evidence="33">
    <location>
        <begin position="15"/>
        <end position="26"/>
    </location>
</feature>
<feature type="strand" evidence="33">
    <location>
        <begin position="29"/>
        <end position="39"/>
    </location>
</feature>
<feature type="helix" evidence="33">
    <location>
        <begin position="44"/>
        <end position="54"/>
    </location>
</feature>
<feature type="strand" evidence="33">
    <location>
        <begin position="57"/>
        <end position="63"/>
    </location>
</feature>
<feature type="helix" evidence="33">
    <location>
        <begin position="65"/>
        <end position="71"/>
    </location>
</feature>
<feature type="helix" evidence="33">
    <location>
        <begin position="73"/>
        <end position="78"/>
    </location>
</feature>
<feature type="turn" evidence="33">
    <location>
        <begin position="84"/>
        <end position="86"/>
    </location>
</feature>
<feature type="turn" evidence="33">
    <location>
        <begin position="90"/>
        <end position="93"/>
    </location>
</feature>
<feature type="helix" evidence="33">
    <location>
        <begin position="94"/>
        <end position="109"/>
    </location>
</feature>
<feature type="strand" evidence="33">
    <location>
        <begin position="112"/>
        <end position="115"/>
    </location>
</feature>
<feature type="helix" evidence="33">
    <location>
        <begin position="124"/>
        <end position="135"/>
    </location>
</feature>
<feature type="strand" evidence="33">
    <location>
        <begin position="140"/>
        <end position="142"/>
    </location>
</feature>
<feature type="helix" evidence="33">
    <location>
        <begin position="144"/>
        <end position="146"/>
    </location>
</feature>
<feature type="helix" evidence="33">
    <location>
        <begin position="148"/>
        <end position="151"/>
    </location>
</feature>
<feature type="helix" evidence="33">
    <location>
        <begin position="158"/>
        <end position="166"/>
    </location>
</feature>
<feature type="strand" evidence="33">
    <location>
        <begin position="181"/>
        <end position="183"/>
    </location>
</feature>
<feature type="strand" evidence="33">
    <location>
        <begin position="188"/>
        <end position="190"/>
    </location>
</feature>
<feature type="helix" evidence="33">
    <location>
        <begin position="193"/>
        <end position="196"/>
    </location>
</feature>
<feature type="helix" evidence="33">
    <location>
        <begin position="204"/>
        <end position="206"/>
    </location>
</feature>
<feature type="turn" evidence="33">
    <location>
        <begin position="213"/>
        <end position="215"/>
    </location>
</feature>
<feature type="strand" evidence="33">
    <location>
        <begin position="221"/>
        <end position="228"/>
    </location>
</feature>
<feature type="strand" evidence="33">
    <location>
        <begin position="231"/>
        <end position="237"/>
    </location>
</feature>
<feature type="turn" evidence="33">
    <location>
        <begin position="238"/>
        <end position="240"/>
    </location>
</feature>
<feature type="helix" evidence="33">
    <location>
        <begin position="247"/>
        <end position="261"/>
    </location>
</feature>
<feature type="strand" evidence="33">
    <location>
        <begin position="265"/>
        <end position="271"/>
    </location>
</feature>
<feature type="strand" evidence="33">
    <location>
        <begin position="277"/>
        <end position="283"/>
    </location>
</feature>
<feature type="helix" evidence="33">
    <location>
        <begin position="285"/>
        <end position="301"/>
    </location>
</feature>
<feature type="helix" evidence="33">
    <location>
        <begin position="304"/>
        <end position="323"/>
    </location>
</feature>
<feature type="strand" evidence="33">
    <location>
        <begin position="326"/>
        <end position="328"/>
    </location>
</feature>
<feature type="helix" evidence="33">
    <location>
        <begin position="329"/>
        <end position="341"/>
    </location>
</feature>
<feature type="turn" evidence="33">
    <location>
        <begin position="342"/>
        <end position="344"/>
    </location>
</feature>
<feature type="strand" evidence="33">
    <location>
        <begin position="347"/>
        <end position="354"/>
    </location>
</feature>
<feature type="strand" evidence="33">
    <location>
        <begin position="357"/>
        <end position="364"/>
    </location>
</feature>
<feature type="helix" evidence="33">
    <location>
        <begin position="372"/>
        <end position="375"/>
    </location>
</feature>
<feature type="helix" evidence="33">
    <location>
        <begin position="385"/>
        <end position="404"/>
    </location>
</feature>
<sequence>MSSKGSVVLAYSGGLDTSCILVWLKEQGYDVIAYLANIGQKEDFEEARKKALKLGAKKVFIEDVSREFVEEFIWPAIQSSALYEDRYLLGTSLARPCIARKQVEIAQREGAKYVSHGATGKGNDQVRFELSCYSLAPQIKVIAPWRMPEFYNRFKGRNDLMEYAKQHGIPIPVTPKNPWSMDENLMHISYEAGILENPKNQAPPGLYTKTQDPAKAPNTPDILEIEFKKGVPVKVTNVKDGTTHQTSLELFMYLNEVAGKHGVGRIDIVENRFIGMKSRGIYETPAGTILYHAHLDIEAFTMDREVRKIKQGLGLKFAELVYTGFWHSPECEFVRHCIAKSQERVEGKVQVSVLKGQVYILGRESPLSLYNEELVSMNVQGDYEPTDATGFININSLRLKEYHRLQSKVTAK</sequence>
<organism>
    <name type="scientific">Homo sapiens</name>
    <name type="common">Human</name>
    <dbReference type="NCBI Taxonomy" id="9606"/>
    <lineage>
        <taxon>Eukaryota</taxon>
        <taxon>Metazoa</taxon>
        <taxon>Chordata</taxon>
        <taxon>Craniata</taxon>
        <taxon>Vertebrata</taxon>
        <taxon>Euteleostomi</taxon>
        <taxon>Mammalia</taxon>
        <taxon>Eutheria</taxon>
        <taxon>Euarchontoglires</taxon>
        <taxon>Primates</taxon>
        <taxon>Haplorrhini</taxon>
        <taxon>Catarrhini</taxon>
        <taxon>Hominidae</taxon>
        <taxon>Homo</taxon>
    </lineage>
</organism>